<keyword id="KW-0240">DNA-directed RNA polymerase</keyword>
<keyword id="KW-0548">Nucleotidyltransferase</keyword>
<keyword id="KW-0804">Transcription</keyword>
<keyword id="KW-0808">Transferase</keyword>
<sequence>MSISQSDASLAAVPAVDQFDPSSGASGGYDTPLGITNPPIDELLDRVSSKYALVIYAAKRARQINDYYNQLGEGILEYVGPLVEPGLQEKPLSIALREIHADLLEHTEGE</sequence>
<gene>
    <name evidence="1" type="primary">rpoZ</name>
    <name type="ordered locus">BCG_1451</name>
</gene>
<proteinExistence type="inferred from homology"/>
<evidence type="ECO:0000255" key="1">
    <source>
        <dbReference type="HAMAP-Rule" id="MF_00366"/>
    </source>
</evidence>
<dbReference type="EC" id="2.7.7.6" evidence="1"/>
<dbReference type="EMBL" id="AM408590">
    <property type="protein sequence ID" value="CAL71438.1"/>
    <property type="molecule type" value="Genomic_DNA"/>
</dbReference>
<dbReference type="RefSeq" id="WP_003407248.1">
    <property type="nucleotide sequence ID" value="NC_008769.1"/>
</dbReference>
<dbReference type="SMR" id="A1KIH9"/>
<dbReference type="GeneID" id="45425368"/>
<dbReference type="KEGG" id="mbb:BCG_1451"/>
<dbReference type="HOGENOM" id="CLU_125406_1_1_11"/>
<dbReference type="Proteomes" id="UP000001472">
    <property type="component" value="Chromosome"/>
</dbReference>
<dbReference type="GO" id="GO:0000428">
    <property type="term" value="C:DNA-directed RNA polymerase complex"/>
    <property type="evidence" value="ECO:0007669"/>
    <property type="project" value="UniProtKB-KW"/>
</dbReference>
<dbReference type="GO" id="GO:0003677">
    <property type="term" value="F:DNA binding"/>
    <property type="evidence" value="ECO:0007669"/>
    <property type="project" value="UniProtKB-UniRule"/>
</dbReference>
<dbReference type="GO" id="GO:0003899">
    <property type="term" value="F:DNA-directed RNA polymerase activity"/>
    <property type="evidence" value="ECO:0007669"/>
    <property type="project" value="UniProtKB-UniRule"/>
</dbReference>
<dbReference type="GO" id="GO:0006351">
    <property type="term" value="P:DNA-templated transcription"/>
    <property type="evidence" value="ECO:0007669"/>
    <property type="project" value="UniProtKB-UniRule"/>
</dbReference>
<dbReference type="FunFam" id="3.90.940.10:FF:000002">
    <property type="entry name" value="DNA-directed RNA polymerase subunit omega"/>
    <property type="match status" value="1"/>
</dbReference>
<dbReference type="Gene3D" id="3.90.940.10">
    <property type="match status" value="1"/>
</dbReference>
<dbReference type="HAMAP" id="MF_00366">
    <property type="entry name" value="RNApol_bact_RpoZ"/>
    <property type="match status" value="1"/>
</dbReference>
<dbReference type="InterPro" id="IPR003716">
    <property type="entry name" value="DNA-dir_RNA_pol_omega"/>
</dbReference>
<dbReference type="InterPro" id="IPR006110">
    <property type="entry name" value="Pol_omega/Rpo6/RPB6"/>
</dbReference>
<dbReference type="InterPro" id="IPR036161">
    <property type="entry name" value="RPB6/omega-like_sf"/>
</dbReference>
<dbReference type="NCBIfam" id="TIGR00690">
    <property type="entry name" value="rpoZ"/>
    <property type="match status" value="1"/>
</dbReference>
<dbReference type="PANTHER" id="PTHR34476">
    <property type="entry name" value="DNA-DIRECTED RNA POLYMERASE SUBUNIT OMEGA"/>
    <property type="match status" value="1"/>
</dbReference>
<dbReference type="PANTHER" id="PTHR34476:SF1">
    <property type="entry name" value="DNA-DIRECTED RNA POLYMERASE SUBUNIT OMEGA"/>
    <property type="match status" value="1"/>
</dbReference>
<dbReference type="Pfam" id="PF01192">
    <property type="entry name" value="RNA_pol_Rpb6"/>
    <property type="match status" value="1"/>
</dbReference>
<dbReference type="SMART" id="SM01409">
    <property type="entry name" value="RNA_pol_Rpb6"/>
    <property type="match status" value="1"/>
</dbReference>
<dbReference type="SUPFAM" id="SSF63562">
    <property type="entry name" value="RPB6/omega subunit-like"/>
    <property type="match status" value="1"/>
</dbReference>
<feature type="chain" id="PRO_1000005959" description="DNA-directed RNA polymerase subunit omega">
    <location>
        <begin position="1"/>
        <end position="110"/>
    </location>
</feature>
<name>RPOZ_MYCBP</name>
<reference key="1">
    <citation type="journal article" date="2007" name="Proc. Natl. Acad. Sci. U.S.A.">
        <title>Genome plasticity of BCG and impact on vaccine efficacy.</title>
        <authorList>
            <person name="Brosch R."/>
            <person name="Gordon S.V."/>
            <person name="Garnier T."/>
            <person name="Eiglmeier K."/>
            <person name="Frigui W."/>
            <person name="Valenti P."/>
            <person name="Dos Santos S."/>
            <person name="Duthoy S."/>
            <person name="Lacroix C."/>
            <person name="Garcia-Pelayo C."/>
            <person name="Inwald J.K."/>
            <person name="Golby P."/>
            <person name="Garcia J.N."/>
            <person name="Hewinson R.G."/>
            <person name="Behr M.A."/>
            <person name="Quail M.A."/>
            <person name="Churcher C."/>
            <person name="Barrell B.G."/>
            <person name="Parkhill J."/>
            <person name="Cole S.T."/>
        </authorList>
    </citation>
    <scope>NUCLEOTIDE SEQUENCE [LARGE SCALE GENOMIC DNA]</scope>
    <source>
        <strain>BCG / Pasteur 1173P2</strain>
    </source>
</reference>
<comment type="function">
    <text evidence="1">Promotes RNA polymerase assembly. Latches the N- and C-terminal regions of the beta' subunit thereby facilitating its interaction with the beta and alpha subunits.</text>
</comment>
<comment type="catalytic activity">
    <reaction evidence="1">
        <text>RNA(n) + a ribonucleoside 5'-triphosphate = RNA(n+1) + diphosphate</text>
        <dbReference type="Rhea" id="RHEA:21248"/>
        <dbReference type="Rhea" id="RHEA-COMP:14527"/>
        <dbReference type="Rhea" id="RHEA-COMP:17342"/>
        <dbReference type="ChEBI" id="CHEBI:33019"/>
        <dbReference type="ChEBI" id="CHEBI:61557"/>
        <dbReference type="ChEBI" id="CHEBI:140395"/>
        <dbReference type="EC" id="2.7.7.6"/>
    </reaction>
</comment>
<comment type="subunit">
    <text evidence="1">The RNAP catalytic core consists of 2 alpha, 1 beta, 1 beta' and 1 omega subunit. When a sigma factor is associated with the core the holoenzyme is formed, which can initiate transcription.</text>
</comment>
<comment type="similarity">
    <text evidence="1">Belongs to the RNA polymerase subunit omega family.</text>
</comment>
<accession>A1KIH9</accession>
<protein>
    <recommendedName>
        <fullName evidence="1">DNA-directed RNA polymerase subunit omega</fullName>
        <shortName evidence="1">RNAP omega subunit</shortName>
        <ecNumber evidence="1">2.7.7.6</ecNumber>
    </recommendedName>
    <alternativeName>
        <fullName evidence="1">RNA polymerase omega subunit</fullName>
    </alternativeName>
    <alternativeName>
        <fullName evidence="1">Transcriptase subunit omega</fullName>
    </alternativeName>
</protein>
<organism>
    <name type="scientific">Mycobacterium bovis (strain BCG / Pasteur 1173P2)</name>
    <dbReference type="NCBI Taxonomy" id="410289"/>
    <lineage>
        <taxon>Bacteria</taxon>
        <taxon>Bacillati</taxon>
        <taxon>Actinomycetota</taxon>
        <taxon>Actinomycetes</taxon>
        <taxon>Mycobacteriales</taxon>
        <taxon>Mycobacteriaceae</taxon>
        <taxon>Mycobacterium</taxon>
        <taxon>Mycobacterium tuberculosis complex</taxon>
    </lineage>
</organism>